<comment type="function">
    <text evidence="1">May be involved in the transport of PQQ or its precursor to the periplasm.</text>
</comment>
<comment type="pathway">
    <text evidence="1">Cofactor biosynthesis; pyrroloquinoline quinone biosynthesis.</text>
</comment>
<comment type="similarity">
    <text evidence="1">Belongs to the PqqB family.</text>
</comment>
<reference key="1">
    <citation type="submission" date="2008-02" db="EMBL/GenBank/DDBJ databases">
        <title>Complete sequence of chromosome of Methylobacterium sp. 4-46.</title>
        <authorList>
            <consortium name="US DOE Joint Genome Institute"/>
            <person name="Copeland A."/>
            <person name="Lucas S."/>
            <person name="Lapidus A."/>
            <person name="Glavina del Rio T."/>
            <person name="Dalin E."/>
            <person name="Tice H."/>
            <person name="Bruce D."/>
            <person name="Goodwin L."/>
            <person name="Pitluck S."/>
            <person name="Chertkov O."/>
            <person name="Brettin T."/>
            <person name="Detter J.C."/>
            <person name="Han C."/>
            <person name="Kuske C.R."/>
            <person name="Schmutz J."/>
            <person name="Larimer F."/>
            <person name="Land M."/>
            <person name="Hauser L."/>
            <person name="Kyrpides N."/>
            <person name="Ivanova N."/>
            <person name="Marx C.J."/>
            <person name="Richardson P."/>
        </authorList>
    </citation>
    <scope>NUCLEOTIDE SEQUENCE [LARGE SCALE GENOMIC DNA]</scope>
    <source>
        <strain>4-46</strain>
    </source>
</reference>
<feature type="chain" id="PRO_1000131166" description="Coenzyme PQQ synthesis protein B">
    <location>
        <begin position="1"/>
        <end position="299"/>
    </location>
</feature>
<accession>B0UE10</accession>
<gene>
    <name evidence="1" type="primary">pqqB</name>
    <name type="ordered locus">M446_5765</name>
</gene>
<organism>
    <name type="scientific">Methylobacterium sp. (strain 4-46)</name>
    <dbReference type="NCBI Taxonomy" id="426117"/>
    <lineage>
        <taxon>Bacteria</taxon>
        <taxon>Pseudomonadati</taxon>
        <taxon>Pseudomonadota</taxon>
        <taxon>Alphaproteobacteria</taxon>
        <taxon>Hyphomicrobiales</taxon>
        <taxon>Methylobacteriaceae</taxon>
        <taxon>Methylobacterium</taxon>
    </lineage>
</organism>
<name>PQQB_METS4</name>
<protein>
    <recommendedName>
        <fullName evidence="1">Coenzyme PQQ synthesis protein B</fullName>
    </recommendedName>
    <alternativeName>
        <fullName evidence="1">Pyrroloquinoline quinone biosynthesis protein B</fullName>
    </alternativeName>
</protein>
<proteinExistence type="inferred from homology"/>
<sequence>MQAIILGSAAGGGVPQWNCRCPHCTMAWAGDARVKPRTQSSLAVSPDGETWLLVNASPDIRQQLFATPALHPARGLRHSPIAAVLLTNGDVDHVAGLLTLRESQPFRLHATRNILDSVSANRVFDVLAPEHVARREVALDESFAPVPGLAVTLFAVPGKVPLWLEEGTPEIGQETETTVGALIEAGGKRLAYVPGCARVTDDLRRRLSGVDVLLFDGTVYLDDDMIRAGVGTKTGWRMGHVPMTGEGGAIAALAEVPIGRRIFVHINNTNPVLVEESEARRAVEAEGWTVAHDGLTLTL</sequence>
<dbReference type="EMBL" id="CP000943">
    <property type="protein sequence ID" value="ACA20053.1"/>
    <property type="molecule type" value="Genomic_DNA"/>
</dbReference>
<dbReference type="RefSeq" id="WP_012335431.1">
    <property type="nucleotide sequence ID" value="NC_010511.1"/>
</dbReference>
<dbReference type="SMR" id="B0UE10"/>
<dbReference type="STRING" id="426117.M446_5765"/>
<dbReference type="KEGG" id="met:M446_5765"/>
<dbReference type="eggNOG" id="COG1235">
    <property type="taxonomic scope" value="Bacteria"/>
</dbReference>
<dbReference type="HOGENOM" id="CLU_061120_0_0_5"/>
<dbReference type="UniPathway" id="UPA00539"/>
<dbReference type="GO" id="GO:0018189">
    <property type="term" value="P:pyrroloquinoline quinone biosynthetic process"/>
    <property type="evidence" value="ECO:0007669"/>
    <property type="project" value="UniProtKB-UniRule"/>
</dbReference>
<dbReference type="CDD" id="cd16274">
    <property type="entry name" value="PQQB-like_MBL-fold"/>
    <property type="match status" value="1"/>
</dbReference>
<dbReference type="Gene3D" id="3.60.15.10">
    <property type="entry name" value="Ribonuclease Z/Hydroxyacylglutathione hydrolase-like"/>
    <property type="match status" value="1"/>
</dbReference>
<dbReference type="HAMAP" id="MF_00653">
    <property type="entry name" value="PQQ_syn_PqqB"/>
    <property type="match status" value="1"/>
</dbReference>
<dbReference type="InterPro" id="IPR001279">
    <property type="entry name" value="Metallo-B-lactamas"/>
</dbReference>
<dbReference type="InterPro" id="IPR011842">
    <property type="entry name" value="PQQ_synth_PqqB"/>
</dbReference>
<dbReference type="InterPro" id="IPR036866">
    <property type="entry name" value="RibonucZ/Hydroxyglut_hydro"/>
</dbReference>
<dbReference type="NCBIfam" id="TIGR02108">
    <property type="entry name" value="PQQ_syn_pqqB"/>
    <property type="match status" value="1"/>
</dbReference>
<dbReference type="PANTHER" id="PTHR42663:SF7">
    <property type="entry name" value="COENZYME PQQ SYNTHESIS PROTEIN B"/>
    <property type="match status" value="1"/>
</dbReference>
<dbReference type="PANTHER" id="PTHR42663">
    <property type="entry name" value="HYDROLASE C777.06C-RELATED-RELATED"/>
    <property type="match status" value="1"/>
</dbReference>
<dbReference type="Pfam" id="PF12706">
    <property type="entry name" value="Lactamase_B_2"/>
    <property type="match status" value="1"/>
</dbReference>
<dbReference type="SUPFAM" id="SSF56281">
    <property type="entry name" value="Metallo-hydrolase/oxidoreductase"/>
    <property type="match status" value="1"/>
</dbReference>
<keyword id="KW-0884">PQQ biosynthesis</keyword>
<keyword id="KW-0813">Transport</keyword>
<evidence type="ECO:0000255" key="1">
    <source>
        <dbReference type="HAMAP-Rule" id="MF_00653"/>
    </source>
</evidence>